<organism>
    <name type="scientific">Rattus norvegicus</name>
    <name type="common">Rat</name>
    <dbReference type="NCBI Taxonomy" id="10116"/>
    <lineage>
        <taxon>Eukaryota</taxon>
        <taxon>Metazoa</taxon>
        <taxon>Chordata</taxon>
        <taxon>Craniata</taxon>
        <taxon>Vertebrata</taxon>
        <taxon>Euteleostomi</taxon>
        <taxon>Mammalia</taxon>
        <taxon>Eutheria</taxon>
        <taxon>Euarchontoglires</taxon>
        <taxon>Glires</taxon>
        <taxon>Rodentia</taxon>
        <taxon>Myomorpha</taxon>
        <taxon>Muroidea</taxon>
        <taxon>Muridae</taxon>
        <taxon>Murinae</taxon>
        <taxon>Rattus</taxon>
    </lineage>
</organism>
<dbReference type="EC" id="2.3.2.27" evidence="9"/>
<dbReference type="EMBL" id="AF036255">
    <property type="protein sequence ID" value="AAC17997.1"/>
    <property type="molecule type" value="mRNA"/>
</dbReference>
<dbReference type="RefSeq" id="NP_113974.1">
    <property type="nucleotide sequence ID" value="NM_031786.1"/>
</dbReference>
<dbReference type="SMR" id="O70277"/>
<dbReference type="BioGRID" id="249781">
    <property type="interactions" value="4"/>
</dbReference>
<dbReference type="FunCoup" id="O70277">
    <property type="interactions" value="1390"/>
</dbReference>
<dbReference type="IntAct" id="O70277">
    <property type="interactions" value="2"/>
</dbReference>
<dbReference type="MINT" id="O70277"/>
<dbReference type="STRING" id="10116.ENSRNOP00000024850"/>
<dbReference type="iPTMnet" id="O70277"/>
<dbReference type="PhosphoSitePlus" id="O70277"/>
<dbReference type="SwissPalm" id="O70277"/>
<dbReference type="jPOST" id="O70277"/>
<dbReference type="PaxDb" id="10116-ENSRNOP00000024850"/>
<dbReference type="GeneID" id="83616"/>
<dbReference type="KEGG" id="rno:83616"/>
<dbReference type="UCSC" id="RGD:70074">
    <property type="organism name" value="rat"/>
</dbReference>
<dbReference type="AGR" id="RGD:70074"/>
<dbReference type="CTD" id="10612"/>
<dbReference type="RGD" id="70074">
    <property type="gene designation" value="Trim3"/>
</dbReference>
<dbReference type="eggNOG" id="KOG2177">
    <property type="taxonomic scope" value="Eukaryota"/>
</dbReference>
<dbReference type="InParanoid" id="O70277"/>
<dbReference type="PhylomeDB" id="O70277"/>
<dbReference type="PRO" id="PR:O70277"/>
<dbReference type="Proteomes" id="UP000002494">
    <property type="component" value="Unplaced"/>
</dbReference>
<dbReference type="GO" id="GO:0005737">
    <property type="term" value="C:cytoplasm"/>
    <property type="evidence" value="ECO:0000266"/>
    <property type="project" value="RGD"/>
</dbReference>
<dbReference type="GO" id="GO:0030425">
    <property type="term" value="C:dendrite"/>
    <property type="evidence" value="ECO:0007669"/>
    <property type="project" value="UniProtKB-SubCell"/>
</dbReference>
<dbReference type="GO" id="GO:0005769">
    <property type="term" value="C:early endosome"/>
    <property type="evidence" value="ECO:0007669"/>
    <property type="project" value="UniProtKB-SubCell"/>
</dbReference>
<dbReference type="GO" id="GO:0098978">
    <property type="term" value="C:glutamatergic synapse"/>
    <property type="evidence" value="ECO:0000314"/>
    <property type="project" value="SynGO"/>
</dbReference>
<dbReference type="GO" id="GO:0005794">
    <property type="term" value="C:Golgi apparatus"/>
    <property type="evidence" value="ECO:0000266"/>
    <property type="project" value="RGD"/>
</dbReference>
<dbReference type="GO" id="GO:0098794">
    <property type="term" value="C:postsynapse"/>
    <property type="evidence" value="ECO:0000314"/>
    <property type="project" value="SynGO"/>
</dbReference>
<dbReference type="GO" id="GO:0042802">
    <property type="term" value="F:identical protein binding"/>
    <property type="evidence" value="ECO:0000266"/>
    <property type="project" value="RGD"/>
</dbReference>
<dbReference type="GO" id="GO:0061630">
    <property type="term" value="F:ubiquitin protein ligase activity"/>
    <property type="evidence" value="ECO:0000266"/>
    <property type="project" value="RGD"/>
</dbReference>
<dbReference type="GO" id="GO:0004842">
    <property type="term" value="F:ubiquitin-protein transferase activity"/>
    <property type="evidence" value="ECO:0000266"/>
    <property type="project" value="RGD"/>
</dbReference>
<dbReference type="GO" id="GO:0008270">
    <property type="term" value="F:zinc ion binding"/>
    <property type="evidence" value="ECO:0007669"/>
    <property type="project" value="UniProtKB-KW"/>
</dbReference>
<dbReference type="GO" id="GO:0061351">
    <property type="term" value="P:neural precursor cell proliferation"/>
    <property type="evidence" value="ECO:0000266"/>
    <property type="project" value="RGD"/>
</dbReference>
<dbReference type="GO" id="GO:0034141">
    <property type="term" value="P:positive regulation of toll-like receptor 3 signaling pathway"/>
    <property type="evidence" value="ECO:0000266"/>
    <property type="project" value="RGD"/>
</dbReference>
<dbReference type="GO" id="GO:0043161">
    <property type="term" value="P:proteasome-mediated ubiquitin-dependent protein catabolic process"/>
    <property type="evidence" value="ECO:0000318"/>
    <property type="project" value="GO_Central"/>
</dbReference>
<dbReference type="GO" id="GO:0070534">
    <property type="term" value="P:protein K63-linked ubiquitination"/>
    <property type="evidence" value="ECO:0000266"/>
    <property type="project" value="RGD"/>
</dbReference>
<dbReference type="GO" id="GO:0000209">
    <property type="term" value="P:protein polyubiquitination"/>
    <property type="evidence" value="ECO:0000318"/>
    <property type="project" value="GO_Central"/>
</dbReference>
<dbReference type="GO" id="GO:0015031">
    <property type="term" value="P:protein transport"/>
    <property type="evidence" value="ECO:0007669"/>
    <property type="project" value="UniProtKB-KW"/>
</dbReference>
<dbReference type="GO" id="GO:0016567">
    <property type="term" value="P:protein ubiquitination"/>
    <property type="evidence" value="ECO:0000266"/>
    <property type="project" value="RGD"/>
</dbReference>
<dbReference type="GO" id="GO:0140252">
    <property type="term" value="P:regulation protein catabolic process at postsynapse"/>
    <property type="evidence" value="ECO:0000314"/>
    <property type="project" value="SynGO"/>
</dbReference>
<dbReference type="CDD" id="cd19825">
    <property type="entry name" value="Bbox2_TRIM3_C-VII"/>
    <property type="match status" value="1"/>
</dbReference>
<dbReference type="CDD" id="cd20482">
    <property type="entry name" value="CC_brat-like"/>
    <property type="match status" value="1"/>
</dbReference>
<dbReference type="CDD" id="cd14960">
    <property type="entry name" value="NHL_TRIM2_like"/>
    <property type="match status" value="1"/>
</dbReference>
<dbReference type="CDD" id="cd16768">
    <property type="entry name" value="RING-HC_TRIM3"/>
    <property type="match status" value="1"/>
</dbReference>
<dbReference type="FunFam" id="2.120.10.30:FF:000007">
    <property type="entry name" value="Putative tripartite motif-containing protein 2"/>
    <property type="match status" value="1"/>
</dbReference>
<dbReference type="FunFam" id="2.120.10.30:FF:000004">
    <property type="entry name" value="Tripartite motif containing 2"/>
    <property type="match status" value="1"/>
</dbReference>
<dbReference type="FunFam" id="3.30.40.10:FF:000032">
    <property type="entry name" value="Tripartite motif containing 2"/>
    <property type="match status" value="1"/>
</dbReference>
<dbReference type="FunFam" id="3.30.160.60:FF:000154">
    <property type="entry name" value="Tripartite motif-containing protein 2"/>
    <property type="match status" value="1"/>
</dbReference>
<dbReference type="FunFam" id="2.60.40.10:FF:000412">
    <property type="entry name" value="tripartite motif-containing protein 3"/>
    <property type="match status" value="1"/>
</dbReference>
<dbReference type="Gene3D" id="3.30.160.60">
    <property type="entry name" value="Classic Zinc Finger"/>
    <property type="match status" value="1"/>
</dbReference>
<dbReference type="Gene3D" id="2.60.40.10">
    <property type="entry name" value="Immunoglobulins"/>
    <property type="match status" value="1"/>
</dbReference>
<dbReference type="Gene3D" id="2.120.10.30">
    <property type="entry name" value="TolB, C-terminal domain"/>
    <property type="match status" value="2"/>
</dbReference>
<dbReference type="Gene3D" id="3.30.40.10">
    <property type="entry name" value="Zinc/RING finger domain, C3HC4 (zinc finger)"/>
    <property type="match status" value="1"/>
</dbReference>
<dbReference type="InterPro" id="IPR011042">
    <property type="entry name" value="6-blade_b-propeller_TolB-like"/>
</dbReference>
<dbReference type="InterPro" id="IPR003649">
    <property type="entry name" value="Bbox_C"/>
</dbReference>
<dbReference type="InterPro" id="IPR017868">
    <property type="entry name" value="Filamin/ABP280_repeat-like"/>
</dbReference>
<dbReference type="InterPro" id="IPR001298">
    <property type="entry name" value="Filamin/ABP280_rpt"/>
</dbReference>
<dbReference type="InterPro" id="IPR013783">
    <property type="entry name" value="Ig-like_fold"/>
</dbReference>
<dbReference type="InterPro" id="IPR014756">
    <property type="entry name" value="Ig_E-set"/>
</dbReference>
<dbReference type="InterPro" id="IPR001258">
    <property type="entry name" value="NHL_repeat"/>
</dbReference>
<dbReference type="InterPro" id="IPR050952">
    <property type="entry name" value="TRIM-NHL_E3_ligases"/>
</dbReference>
<dbReference type="InterPro" id="IPR000315">
    <property type="entry name" value="Znf_B-box"/>
</dbReference>
<dbReference type="InterPro" id="IPR018957">
    <property type="entry name" value="Znf_C3HC4_RING-type"/>
</dbReference>
<dbReference type="InterPro" id="IPR001841">
    <property type="entry name" value="Znf_RING"/>
</dbReference>
<dbReference type="InterPro" id="IPR013083">
    <property type="entry name" value="Znf_RING/FYVE/PHD"/>
</dbReference>
<dbReference type="InterPro" id="IPR017907">
    <property type="entry name" value="Znf_RING_CS"/>
</dbReference>
<dbReference type="PANTHER" id="PTHR24104">
    <property type="entry name" value="E3 UBIQUITIN-PROTEIN LIGASE NHLRC1-RELATED"/>
    <property type="match status" value="1"/>
</dbReference>
<dbReference type="PANTHER" id="PTHR24104:SF21">
    <property type="entry name" value="TRIPARTITE MOTIF-CONTAINING PROTEIN 3"/>
    <property type="match status" value="1"/>
</dbReference>
<dbReference type="Pfam" id="PF00630">
    <property type="entry name" value="Filamin"/>
    <property type="match status" value="1"/>
</dbReference>
<dbReference type="Pfam" id="PF01436">
    <property type="entry name" value="NHL"/>
    <property type="match status" value="6"/>
</dbReference>
<dbReference type="Pfam" id="PF00643">
    <property type="entry name" value="zf-B_box"/>
    <property type="match status" value="1"/>
</dbReference>
<dbReference type="Pfam" id="PF00097">
    <property type="entry name" value="zf-C3HC4"/>
    <property type="match status" value="1"/>
</dbReference>
<dbReference type="SMART" id="SM00502">
    <property type="entry name" value="BBC"/>
    <property type="match status" value="1"/>
</dbReference>
<dbReference type="SMART" id="SM00336">
    <property type="entry name" value="BBOX"/>
    <property type="match status" value="1"/>
</dbReference>
<dbReference type="SMART" id="SM00557">
    <property type="entry name" value="IG_FLMN"/>
    <property type="match status" value="1"/>
</dbReference>
<dbReference type="SMART" id="SM00184">
    <property type="entry name" value="RING"/>
    <property type="match status" value="1"/>
</dbReference>
<dbReference type="SUPFAM" id="SSF57845">
    <property type="entry name" value="B-box zinc-binding domain"/>
    <property type="match status" value="1"/>
</dbReference>
<dbReference type="SUPFAM" id="SSF81296">
    <property type="entry name" value="E set domains"/>
    <property type="match status" value="1"/>
</dbReference>
<dbReference type="SUPFAM" id="SSF101898">
    <property type="entry name" value="NHL repeat"/>
    <property type="match status" value="1"/>
</dbReference>
<dbReference type="SUPFAM" id="SSF57850">
    <property type="entry name" value="RING/U-box"/>
    <property type="match status" value="1"/>
</dbReference>
<dbReference type="PROSITE" id="PS50194">
    <property type="entry name" value="FILAMIN_REPEAT"/>
    <property type="match status" value="1"/>
</dbReference>
<dbReference type="PROSITE" id="PS51125">
    <property type="entry name" value="NHL"/>
    <property type="match status" value="6"/>
</dbReference>
<dbReference type="PROSITE" id="PS50119">
    <property type="entry name" value="ZF_BBOX"/>
    <property type="match status" value="1"/>
</dbReference>
<dbReference type="PROSITE" id="PS00518">
    <property type="entry name" value="ZF_RING_1"/>
    <property type="match status" value="1"/>
</dbReference>
<dbReference type="PROSITE" id="PS50089">
    <property type="entry name" value="ZF_RING_2"/>
    <property type="match status" value="1"/>
</dbReference>
<keyword id="KW-0007">Acetylation</keyword>
<keyword id="KW-0966">Cell projection</keyword>
<keyword id="KW-0175">Coiled coil</keyword>
<keyword id="KW-0963">Cytoplasm</keyword>
<keyword id="KW-0967">Endosome</keyword>
<keyword id="KW-0333">Golgi apparatus</keyword>
<keyword id="KW-0479">Metal-binding</keyword>
<keyword id="KW-0597">Phosphoprotein</keyword>
<keyword id="KW-0653">Protein transport</keyword>
<keyword id="KW-1185">Reference proteome</keyword>
<keyword id="KW-0677">Repeat</keyword>
<keyword id="KW-0808">Transferase</keyword>
<keyword id="KW-0813">Transport</keyword>
<keyword id="KW-0862">Zinc</keyword>
<keyword id="KW-0863">Zinc-finger</keyword>
<reference key="1">
    <citation type="journal article" date="1999" name="J. Biol. Chem.">
        <title>Cloning and characterization of a novel RING finger protein that interacts with class V myosins.</title>
        <authorList>
            <person name="El-Husseini A.E.-D."/>
            <person name="Vincent S.R."/>
        </authorList>
    </citation>
    <scope>NUCLEOTIDE SEQUENCE [MRNA]</scope>
    <scope>INTERACTION WITH MYO5B</scope>
    <source>
        <tissue>Brain</tissue>
    </source>
</reference>
<reference key="2">
    <citation type="journal article" date="2000" name="Biochem. Biophys. Res. Commun.">
        <title>BERP, a novel ring finger protein, binds to alpha-actinin-4.</title>
        <authorList>
            <person name="El-Husseini A.E.-D."/>
            <person name="Kwasnicka D."/>
            <person name="Yamada T."/>
            <person name="Hirohashi S."/>
            <person name="Vincent S.R."/>
        </authorList>
    </citation>
    <scope>INTERACTION WITH ACTN4</scope>
</reference>
<reference key="3">
    <citation type="journal article" date="2010" name="PLoS ONE">
        <title>Degradation of postsynaptic scaffold GKAP and regulation of dendritic spine morphology by the TRIM3 ubiquitin ligase in rat hippocampal neurons.</title>
        <authorList>
            <person name="Hung A.Y."/>
            <person name="Sung C.C."/>
            <person name="Brito I.L."/>
            <person name="Sheng M."/>
        </authorList>
    </citation>
    <scope>FUNCTION</scope>
    <scope>TISSUE SPECIFICITY</scope>
    <scope>CATALYTIC ACTIVITY</scope>
    <scope>MUTAGENESIS OF CYS-22 AND CYS-25</scope>
</reference>
<reference key="4">
    <citation type="journal article" date="2012" name="Nat. Commun.">
        <title>Quantitative maps of protein phosphorylation sites across 14 different rat organs and tissues.</title>
        <authorList>
            <person name="Lundby A."/>
            <person name="Secher A."/>
            <person name="Lage K."/>
            <person name="Nordsborg N.B."/>
            <person name="Dmytriyev A."/>
            <person name="Lundby C."/>
            <person name="Olsen J.V."/>
        </authorList>
    </citation>
    <scope>PHOSPHORYLATION [LARGE SCALE ANALYSIS] AT SER-7 AND SER-427</scope>
    <scope>IDENTIFICATION BY MASS SPECTROMETRY [LARGE SCALE ANALYSIS]</scope>
</reference>
<gene>
    <name type="primary">Trim3</name>
    <name type="synonym">Berp</name>
    <name type="synonym">Rnf22</name>
</gene>
<feature type="initiator methionine" description="Removed" evidence="1">
    <location>
        <position position="1"/>
    </location>
</feature>
<feature type="chain" id="PRO_0000056199" description="Tripartite motif-containing protein 3">
    <location>
        <begin position="2"/>
        <end position="744"/>
    </location>
</feature>
<feature type="repeat" description="Filamin">
    <location>
        <begin position="317"/>
        <end position="418"/>
    </location>
</feature>
<feature type="repeat" description="NHL 1">
    <location>
        <begin position="473"/>
        <end position="516"/>
    </location>
</feature>
<feature type="repeat" description="NHL 2">
    <location>
        <begin position="520"/>
        <end position="563"/>
    </location>
</feature>
<feature type="repeat" description="NHL 3">
    <location>
        <begin position="564"/>
        <end position="605"/>
    </location>
</feature>
<feature type="repeat" description="NHL 4">
    <location>
        <begin position="609"/>
        <end position="652"/>
    </location>
</feature>
<feature type="repeat" description="NHL 5">
    <location>
        <begin position="656"/>
        <end position="699"/>
    </location>
</feature>
<feature type="repeat" description="NHL 6">
    <location>
        <begin position="700"/>
        <end position="743"/>
    </location>
</feature>
<feature type="zinc finger region" description="RING-type" evidence="5">
    <location>
        <begin position="22"/>
        <end position="63"/>
    </location>
</feature>
<feature type="zinc finger region" description="B box-type" evidence="4">
    <location>
        <begin position="110"/>
        <end position="151"/>
    </location>
</feature>
<feature type="region of interest" description="Interaction with KIF21B" evidence="2">
    <location>
        <begin position="2"/>
        <end position="290"/>
    </location>
</feature>
<feature type="region of interest" description="Disordered" evidence="6">
    <location>
        <begin position="420"/>
        <end position="462"/>
    </location>
</feature>
<feature type="coiled-coil region" evidence="3">
    <location>
        <begin position="153"/>
        <end position="224"/>
    </location>
</feature>
<feature type="binding site" evidence="4">
    <location>
        <position position="115"/>
    </location>
    <ligand>
        <name>Zn(2+)</name>
        <dbReference type="ChEBI" id="CHEBI:29105"/>
    </ligand>
</feature>
<feature type="binding site" evidence="4">
    <location>
        <position position="118"/>
    </location>
    <ligand>
        <name>Zn(2+)</name>
        <dbReference type="ChEBI" id="CHEBI:29105"/>
    </ligand>
</feature>
<feature type="binding site" evidence="4">
    <location>
        <position position="138"/>
    </location>
    <ligand>
        <name>Zn(2+)</name>
        <dbReference type="ChEBI" id="CHEBI:29105"/>
    </ligand>
</feature>
<feature type="binding site" evidence="4">
    <location>
        <position position="143"/>
    </location>
    <ligand>
        <name>Zn(2+)</name>
        <dbReference type="ChEBI" id="CHEBI:29105"/>
    </ligand>
</feature>
<feature type="modified residue" description="N-acetylalanine" evidence="1">
    <location>
        <position position="2"/>
    </location>
</feature>
<feature type="modified residue" description="Phosphoserine" evidence="11">
    <location>
        <position position="7"/>
    </location>
</feature>
<feature type="modified residue" description="Phosphoserine" evidence="11">
    <location>
        <position position="427"/>
    </location>
</feature>
<feature type="mutagenesis site" description="Strong loss of GKAP ubiquitination; when associated with S-25." evidence="9">
    <original>C</original>
    <variation>S</variation>
    <location>
        <position position="22"/>
    </location>
</feature>
<feature type="mutagenesis site" description="Strong loss of GKAP ubiquitination; when associated with S-22." evidence="9">
    <original>C</original>
    <variation>S</variation>
    <location>
        <position position="25"/>
    </location>
</feature>
<sequence>MAKREDSPGPEVQPMDKQFLVCSICLDRYRCPKVLPCLHTFCERCLQNYIPPQSLTLSCPVCRQTSILPEQGVSALQNNFFISSLMEAMQQAPDGAHDPEDPHPLSAVAGRPLSCPNHEGKTMEFYCEACETAMCGECRAGEHREHGTVLLRDVVEQHKAALQRQLEAVRGRLPQLSAAIALVGGISQQLQERKAEALAQISAAFEDLEQALQQRKQALVSDLESICGAKQKVLQTQLDTLRQGQEHIGSSCSFAEQALRLGSAPEVLLVRKHMRERLAALAAQAFPERPHENAQLELVLEVDGLRRSVLNLGALLTTSAAAHETVATGEGLRQALVGQPASLTVTTKDKDGRLVRTGSAELCAEITGPDGMRLAVPVVDHKNGTYELVYTARTEGDLLLSVLLYGQPVRGSPFRVRALRPGDLPPSPDDVKRRVKSPGGPGSHVRQKAVRRPSSMYSTGGKRKDNPIVDELVFRVGSRGREKGEFTNLHPLSAASSGRIVVADSNNQCIQVFSNEGQFKFRFGVRGRSPGQLQRPTGVAVDTNGDIIVADYDNRWVSIFSPEGKFKTKIGAGRLMGPKGVAVDRNGHIIVVDNKSCCVFTFQPNGKLVGRFGGRGATDRHFAGPHFVAVNNKNEIVVTDFHNHSVKVYSADGEFLFKFGSHGEGNGQFNAPTGVAVDSNGNIIVADWGNSRIQVFDSSGSFLSYINTSAEPLYGPQGLALTSDGHVVVADAGNHCFKAYRYLQ</sequence>
<protein>
    <recommendedName>
        <fullName>Tripartite motif-containing protein 3</fullName>
        <ecNumber evidence="9">2.3.2.27</ecNumber>
    </recommendedName>
    <alternativeName>
        <fullName>Brain-expressed RING finger protein</fullName>
    </alternativeName>
    <alternativeName>
        <fullName>RING finger protein 22</fullName>
    </alternativeName>
</protein>
<evidence type="ECO:0000250" key="1">
    <source>
        <dbReference type="UniProtKB" id="O75382"/>
    </source>
</evidence>
<evidence type="ECO:0000250" key="2">
    <source>
        <dbReference type="UniProtKB" id="Q9R1R2"/>
    </source>
</evidence>
<evidence type="ECO:0000255" key="3"/>
<evidence type="ECO:0000255" key="4">
    <source>
        <dbReference type="PROSITE-ProRule" id="PRU00024"/>
    </source>
</evidence>
<evidence type="ECO:0000255" key="5">
    <source>
        <dbReference type="PROSITE-ProRule" id="PRU00175"/>
    </source>
</evidence>
<evidence type="ECO:0000256" key="6">
    <source>
        <dbReference type="SAM" id="MobiDB-lite"/>
    </source>
</evidence>
<evidence type="ECO:0000269" key="7">
    <source>
    </source>
</evidence>
<evidence type="ECO:0000269" key="8">
    <source>
    </source>
</evidence>
<evidence type="ECO:0000269" key="9">
    <source>
    </source>
</evidence>
<evidence type="ECO:0000305" key="10"/>
<evidence type="ECO:0007744" key="11">
    <source>
    </source>
</evidence>
<proteinExistence type="evidence at protein level"/>
<comment type="function">
    <text evidence="1 2 9">E3 ubiquitin ligase that plays essential roles in neuronal functions such as regulation of neuronal plasticity, learning, and memory (PubMed:20352094). In addition to its neuronal functions, participates in other biological processes such as innate immunity or cell cycle regulation. Component of the cytoskeleton-associated recycling or transport complex in neurons, polyubiquitinates gamma-actin, thus regulating neuronal plasticity, learning, and memory (By similarity). Ubiquitinates postsynaptic scaffold GKAP, a neuronal substrate involved in synaptic remodeling and thereby modulates dendritic spine morphology (PubMed:20352094). Positively regulates motility of microtubule-dependent motor protein KIF21B (By similarity). Induces growth arrest via its RING-dependent E3 ligase activity and ubiquinates CDKN1A. Positively regulates TLR3-mediated signaling by mediating 'Lys-63'-linked polyubiquitination of TLR3. In turn, promotes the recognition and sorting of polyubiquitinated TLR3 by the ESCRT complexes (By similarity).</text>
</comment>
<comment type="catalytic activity">
    <reaction evidence="9">
        <text>S-ubiquitinyl-[E2 ubiquitin-conjugating enzyme]-L-cysteine + [acceptor protein]-L-lysine = [E2 ubiquitin-conjugating enzyme]-L-cysteine + N(6)-ubiquitinyl-[acceptor protein]-L-lysine.</text>
        <dbReference type="EC" id="2.3.2.27"/>
    </reaction>
</comment>
<comment type="subunit">
    <text evidence="1 2 7 8">Forms homooligomers. Interacts with TRIM2; this interaction reduces TRIM2 activity (By similarity). Associates with myosin-Vb (MYO5B) and alpha-actinin-4 (ACTN4) (PubMed:10391919, PubMed:10673389). Component of the CART complex, at least composed of ACTN4, HGS/HRS, MYO5B and TRIM3. Interacts with ZFYVE28/LST2 (By similarity). Interacts with KIF21B (By similarity).</text>
</comment>
<comment type="subcellular location">
    <subcellularLocation>
        <location evidence="1">Cytoplasm</location>
    </subcellularLocation>
    <subcellularLocation>
        <location evidence="1">Early endosome</location>
    </subcellularLocation>
    <subcellularLocation>
        <location evidence="2">Golgi apparatus</location>
        <location evidence="2">trans-Golgi network</location>
    </subcellularLocation>
    <subcellularLocation>
        <location evidence="2">Cell projection</location>
        <location evidence="2">Dendrite</location>
    </subcellularLocation>
    <text evidence="1">Mainly located in the Golgi apparatus and transported to the early endosomes upon stimulation with dsRNA.</text>
</comment>
<comment type="tissue specificity">
    <text evidence="9">Highly expressed in the brain, moderate levels in the lung, very low levels in the liver, kidney and heart. In the brain, expression was highest in the cerebellum. Expression in the brain is found at low levels at embryonic day 15 and then increases during the first two postnatal weeks before decreasing through adulthood (PubMed:20352094).</text>
</comment>
<comment type="domain">
    <text>The interaction with MYO5B is dependent upon its NHL repeats, which form a beta-propeller (NHL) domain containing six blades.</text>
</comment>
<comment type="similarity">
    <text evidence="10">Belongs to the TRIM/RBCC family.</text>
</comment>
<name>TRIM3_RAT</name>
<accession>O70277</accession>